<gene>
    <name evidence="1" type="primary">murD</name>
    <name type="ordered locus">Psyr_4104</name>
</gene>
<name>MURD_PSEU2</name>
<feature type="chain" id="PRO_0000109065" description="UDP-N-acetylmuramoylalanine--D-glutamate ligase">
    <location>
        <begin position="1"/>
        <end position="448"/>
    </location>
</feature>
<feature type="binding site" evidence="1">
    <location>
        <begin position="116"/>
        <end position="122"/>
    </location>
    <ligand>
        <name>ATP</name>
        <dbReference type="ChEBI" id="CHEBI:30616"/>
    </ligand>
</feature>
<sequence length="448" mass="48046">MSLIVSDRFRIVVGLGKSGMSLVRFLANQGVSFAVADTRENPPELATLRRDYPQVEVRCGELDVDFLCRADELYVSPGLALATPALQQAHARGVKLSGDIELFARYAKAPVIAITGSNAKSTVTTLVGEMAAAAGKRVAVGGNLGTPALDLLSDEVELYVMELSSFQLETTDQLNAEVATVLNISEDHMDRYSGLPAYHLAKHRIFRGARQVVVNGQDALSRPLIGEGLPCWTFGLNKPDFHGFGLREENGEKYLAFQFENLMPVRELKVRGAHNQANALAALALGHAVGLPFDAMLASLREFTGLEHRCQWLREHDGVHYYNDSKATNVGAALAAIEGLGSDIDGKLVLIAGGDGKGADFSGLRAPVARHCRAAVLLGRDAELIAQALGDAVPLLRVDTVQAAVEHSAKLAQCGDAVLLSPACASLDMFKNYEERGRVFAQAVECLS</sequence>
<reference key="1">
    <citation type="journal article" date="2005" name="Proc. Natl. Acad. Sci. U.S.A.">
        <title>Comparison of the complete genome sequences of Pseudomonas syringae pv. syringae B728a and pv. tomato DC3000.</title>
        <authorList>
            <person name="Feil H."/>
            <person name="Feil W.S."/>
            <person name="Chain P."/>
            <person name="Larimer F."/>
            <person name="Dibartolo G."/>
            <person name="Copeland A."/>
            <person name="Lykidis A."/>
            <person name="Trong S."/>
            <person name="Nolan M."/>
            <person name="Goltsman E."/>
            <person name="Thiel J."/>
            <person name="Malfatti S."/>
            <person name="Loper J.E."/>
            <person name="Lapidus A."/>
            <person name="Detter J.C."/>
            <person name="Land M."/>
            <person name="Richardson P.M."/>
            <person name="Kyrpides N.C."/>
            <person name="Ivanova N."/>
            <person name="Lindow S.E."/>
        </authorList>
    </citation>
    <scope>NUCLEOTIDE SEQUENCE [LARGE SCALE GENOMIC DNA]</scope>
    <source>
        <strain>B728a</strain>
    </source>
</reference>
<keyword id="KW-0067">ATP-binding</keyword>
<keyword id="KW-0131">Cell cycle</keyword>
<keyword id="KW-0132">Cell division</keyword>
<keyword id="KW-0133">Cell shape</keyword>
<keyword id="KW-0961">Cell wall biogenesis/degradation</keyword>
<keyword id="KW-0963">Cytoplasm</keyword>
<keyword id="KW-0436">Ligase</keyword>
<keyword id="KW-0547">Nucleotide-binding</keyword>
<keyword id="KW-0573">Peptidoglycan synthesis</keyword>
<protein>
    <recommendedName>
        <fullName evidence="1">UDP-N-acetylmuramoylalanine--D-glutamate ligase</fullName>
        <ecNumber evidence="1">6.3.2.9</ecNumber>
    </recommendedName>
    <alternativeName>
        <fullName evidence="1">D-glutamic acid-adding enzyme</fullName>
    </alternativeName>
    <alternativeName>
        <fullName evidence="1">UDP-N-acetylmuramoyl-L-alanyl-D-glutamate synthetase</fullName>
    </alternativeName>
</protein>
<comment type="function">
    <text evidence="1">Cell wall formation. Catalyzes the addition of glutamate to the nucleotide precursor UDP-N-acetylmuramoyl-L-alanine (UMA).</text>
</comment>
<comment type="catalytic activity">
    <reaction evidence="1">
        <text>UDP-N-acetyl-alpha-D-muramoyl-L-alanine + D-glutamate + ATP = UDP-N-acetyl-alpha-D-muramoyl-L-alanyl-D-glutamate + ADP + phosphate + H(+)</text>
        <dbReference type="Rhea" id="RHEA:16429"/>
        <dbReference type="ChEBI" id="CHEBI:15378"/>
        <dbReference type="ChEBI" id="CHEBI:29986"/>
        <dbReference type="ChEBI" id="CHEBI:30616"/>
        <dbReference type="ChEBI" id="CHEBI:43474"/>
        <dbReference type="ChEBI" id="CHEBI:83898"/>
        <dbReference type="ChEBI" id="CHEBI:83900"/>
        <dbReference type="ChEBI" id="CHEBI:456216"/>
        <dbReference type="EC" id="6.3.2.9"/>
    </reaction>
</comment>
<comment type="pathway">
    <text evidence="1">Cell wall biogenesis; peptidoglycan biosynthesis.</text>
</comment>
<comment type="subcellular location">
    <subcellularLocation>
        <location evidence="1">Cytoplasm</location>
    </subcellularLocation>
</comment>
<comment type="similarity">
    <text evidence="1">Belongs to the MurCDEF family.</text>
</comment>
<dbReference type="EC" id="6.3.2.9" evidence="1"/>
<dbReference type="EMBL" id="CP000075">
    <property type="protein sequence ID" value="AAY39134.1"/>
    <property type="molecule type" value="Genomic_DNA"/>
</dbReference>
<dbReference type="RefSeq" id="WP_011268846.1">
    <property type="nucleotide sequence ID" value="NC_007005.1"/>
</dbReference>
<dbReference type="RefSeq" id="YP_237172.1">
    <property type="nucleotide sequence ID" value="NC_007005.1"/>
</dbReference>
<dbReference type="SMR" id="Q4ZNY8"/>
<dbReference type="STRING" id="205918.Psyr_4104"/>
<dbReference type="KEGG" id="psb:Psyr_4104"/>
<dbReference type="PATRIC" id="fig|205918.7.peg.4222"/>
<dbReference type="eggNOG" id="COG0771">
    <property type="taxonomic scope" value="Bacteria"/>
</dbReference>
<dbReference type="HOGENOM" id="CLU_032540_1_0_6"/>
<dbReference type="OrthoDB" id="9809796at2"/>
<dbReference type="UniPathway" id="UPA00219"/>
<dbReference type="Proteomes" id="UP000000426">
    <property type="component" value="Chromosome"/>
</dbReference>
<dbReference type="GO" id="GO:0005737">
    <property type="term" value="C:cytoplasm"/>
    <property type="evidence" value="ECO:0007669"/>
    <property type="project" value="UniProtKB-SubCell"/>
</dbReference>
<dbReference type="GO" id="GO:0005524">
    <property type="term" value="F:ATP binding"/>
    <property type="evidence" value="ECO:0007669"/>
    <property type="project" value="UniProtKB-UniRule"/>
</dbReference>
<dbReference type="GO" id="GO:0008764">
    <property type="term" value="F:UDP-N-acetylmuramoylalanine-D-glutamate ligase activity"/>
    <property type="evidence" value="ECO:0007669"/>
    <property type="project" value="UniProtKB-UniRule"/>
</dbReference>
<dbReference type="GO" id="GO:0051301">
    <property type="term" value="P:cell division"/>
    <property type="evidence" value="ECO:0007669"/>
    <property type="project" value="UniProtKB-KW"/>
</dbReference>
<dbReference type="GO" id="GO:0071555">
    <property type="term" value="P:cell wall organization"/>
    <property type="evidence" value="ECO:0007669"/>
    <property type="project" value="UniProtKB-KW"/>
</dbReference>
<dbReference type="GO" id="GO:0009252">
    <property type="term" value="P:peptidoglycan biosynthetic process"/>
    <property type="evidence" value="ECO:0007669"/>
    <property type="project" value="UniProtKB-UniRule"/>
</dbReference>
<dbReference type="GO" id="GO:0008360">
    <property type="term" value="P:regulation of cell shape"/>
    <property type="evidence" value="ECO:0007669"/>
    <property type="project" value="UniProtKB-KW"/>
</dbReference>
<dbReference type="Gene3D" id="3.90.190.20">
    <property type="entry name" value="Mur ligase, C-terminal domain"/>
    <property type="match status" value="1"/>
</dbReference>
<dbReference type="Gene3D" id="3.40.1190.10">
    <property type="entry name" value="Mur-like, catalytic domain"/>
    <property type="match status" value="1"/>
</dbReference>
<dbReference type="Gene3D" id="3.40.50.720">
    <property type="entry name" value="NAD(P)-binding Rossmann-like Domain"/>
    <property type="match status" value="1"/>
</dbReference>
<dbReference type="HAMAP" id="MF_00639">
    <property type="entry name" value="MurD"/>
    <property type="match status" value="1"/>
</dbReference>
<dbReference type="InterPro" id="IPR036565">
    <property type="entry name" value="Mur-like_cat_sf"/>
</dbReference>
<dbReference type="InterPro" id="IPR004101">
    <property type="entry name" value="Mur_ligase_C"/>
</dbReference>
<dbReference type="InterPro" id="IPR036615">
    <property type="entry name" value="Mur_ligase_C_dom_sf"/>
</dbReference>
<dbReference type="InterPro" id="IPR013221">
    <property type="entry name" value="Mur_ligase_cen"/>
</dbReference>
<dbReference type="InterPro" id="IPR005762">
    <property type="entry name" value="MurD"/>
</dbReference>
<dbReference type="NCBIfam" id="TIGR01087">
    <property type="entry name" value="murD"/>
    <property type="match status" value="1"/>
</dbReference>
<dbReference type="PANTHER" id="PTHR43692">
    <property type="entry name" value="UDP-N-ACETYLMURAMOYLALANINE--D-GLUTAMATE LIGASE"/>
    <property type="match status" value="1"/>
</dbReference>
<dbReference type="PANTHER" id="PTHR43692:SF1">
    <property type="entry name" value="UDP-N-ACETYLMURAMOYLALANINE--D-GLUTAMATE LIGASE"/>
    <property type="match status" value="1"/>
</dbReference>
<dbReference type="Pfam" id="PF02875">
    <property type="entry name" value="Mur_ligase_C"/>
    <property type="match status" value="1"/>
</dbReference>
<dbReference type="Pfam" id="PF08245">
    <property type="entry name" value="Mur_ligase_M"/>
    <property type="match status" value="1"/>
</dbReference>
<dbReference type="Pfam" id="PF21799">
    <property type="entry name" value="MurD-like_N"/>
    <property type="match status" value="1"/>
</dbReference>
<dbReference type="SUPFAM" id="SSF51984">
    <property type="entry name" value="MurCD N-terminal domain"/>
    <property type="match status" value="1"/>
</dbReference>
<dbReference type="SUPFAM" id="SSF53623">
    <property type="entry name" value="MurD-like peptide ligases, catalytic domain"/>
    <property type="match status" value="1"/>
</dbReference>
<dbReference type="SUPFAM" id="SSF53244">
    <property type="entry name" value="MurD-like peptide ligases, peptide-binding domain"/>
    <property type="match status" value="1"/>
</dbReference>
<evidence type="ECO:0000255" key="1">
    <source>
        <dbReference type="HAMAP-Rule" id="MF_00639"/>
    </source>
</evidence>
<organism>
    <name type="scientific">Pseudomonas syringae pv. syringae (strain B728a)</name>
    <dbReference type="NCBI Taxonomy" id="205918"/>
    <lineage>
        <taxon>Bacteria</taxon>
        <taxon>Pseudomonadati</taxon>
        <taxon>Pseudomonadota</taxon>
        <taxon>Gammaproteobacteria</taxon>
        <taxon>Pseudomonadales</taxon>
        <taxon>Pseudomonadaceae</taxon>
        <taxon>Pseudomonas</taxon>
        <taxon>Pseudomonas syringae</taxon>
    </lineage>
</organism>
<accession>Q4ZNY8</accession>
<proteinExistence type="inferred from homology"/>